<gene>
    <name evidence="1" type="primary">rplB</name>
    <name evidence="1" type="synonym">rpl2</name>
    <name type="ordered locus">MG154</name>
</gene>
<evidence type="ECO:0000255" key="1">
    <source>
        <dbReference type="HAMAP-Rule" id="MF_01320"/>
    </source>
</evidence>
<evidence type="ECO:0000256" key="2">
    <source>
        <dbReference type="SAM" id="MobiDB-lite"/>
    </source>
</evidence>
<evidence type="ECO:0000305" key="3"/>
<dbReference type="EMBL" id="L43967">
    <property type="protein sequence ID" value="AAC71372.1"/>
    <property type="molecule type" value="Genomic_DNA"/>
</dbReference>
<dbReference type="PIR" id="A64217">
    <property type="entry name" value="A64217"/>
</dbReference>
<dbReference type="RefSeq" id="WP_009885838.1">
    <property type="nucleotide sequence ID" value="NC_000908.2"/>
</dbReference>
<dbReference type="SMR" id="P47400"/>
<dbReference type="FunCoup" id="P47400">
    <property type="interactions" value="200"/>
</dbReference>
<dbReference type="STRING" id="243273.MG_154"/>
<dbReference type="GeneID" id="88282287"/>
<dbReference type="KEGG" id="mge:MG_154"/>
<dbReference type="eggNOG" id="COG0090">
    <property type="taxonomic scope" value="Bacteria"/>
</dbReference>
<dbReference type="HOGENOM" id="CLU_036235_2_1_14"/>
<dbReference type="InParanoid" id="P47400"/>
<dbReference type="OrthoDB" id="9778722at2"/>
<dbReference type="BioCyc" id="MGEN243273:G1GJ2-178-MONOMER"/>
<dbReference type="Proteomes" id="UP000000807">
    <property type="component" value="Chromosome"/>
</dbReference>
<dbReference type="GO" id="GO:0015934">
    <property type="term" value="C:large ribosomal subunit"/>
    <property type="evidence" value="ECO:0007669"/>
    <property type="project" value="InterPro"/>
</dbReference>
<dbReference type="GO" id="GO:0003723">
    <property type="term" value="F:RNA binding"/>
    <property type="evidence" value="ECO:0000318"/>
    <property type="project" value="GO_Central"/>
</dbReference>
<dbReference type="GO" id="GO:0019843">
    <property type="term" value="F:rRNA binding"/>
    <property type="evidence" value="ECO:0007669"/>
    <property type="project" value="UniProtKB-UniRule"/>
</dbReference>
<dbReference type="GO" id="GO:0003735">
    <property type="term" value="F:structural constituent of ribosome"/>
    <property type="evidence" value="ECO:0000318"/>
    <property type="project" value="GO_Central"/>
</dbReference>
<dbReference type="GO" id="GO:0016740">
    <property type="term" value="F:transferase activity"/>
    <property type="evidence" value="ECO:0007669"/>
    <property type="project" value="InterPro"/>
</dbReference>
<dbReference type="GO" id="GO:0002181">
    <property type="term" value="P:cytoplasmic translation"/>
    <property type="evidence" value="ECO:0000318"/>
    <property type="project" value="GO_Central"/>
</dbReference>
<dbReference type="FunFam" id="2.30.30.30:FF:000001">
    <property type="entry name" value="50S ribosomal protein L2"/>
    <property type="match status" value="1"/>
</dbReference>
<dbReference type="FunFam" id="4.10.950.10:FF:000001">
    <property type="entry name" value="50S ribosomal protein L2"/>
    <property type="match status" value="1"/>
</dbReference>
<dbReference type="Gene3D" id="2.30.30.30">
    <property type="match status" value="1"/>
</dbReference>
<dbReference type="Gene3D" id="2.40.50.140">
    <property type="entry name" value="Nucleic acid-binding proteins"/>
    <property type="match status" value="1"/>
</dbReference>
<dbReference type="Gene3D" id="4.10.950.10">
    <property type="entry name" value="Ribosomal protein L2, domain 3"/>
    <property type="match status" value="1"/>
</dbReference>
<dbReference type="HAMAP" id="MF_01320_B">
    <property type="entry name" value="Ribosomal_uL2_B"/>
    <property type="match status" value="1"/>
</dbReference>
<dbReference type="InterPro" id="IPR012340">
    <property type="entry name" value="NA-bd_OB-fold"/>
</dbReference>
<dbReference type="InterPro" id="IPR014722">
    <property type="entry name" value="Rib_uL2_dom2"/>
</dbReference>
<dbReference type="InterPro" id="IPR002171">
    <property type="entry name" value="Ribosomal_uL2"/>
</dbReference>
<dbReference type="InterPro" id="IPR005880">
    <property type="entry name" value="Ribosomal_uL2_bac/org-type"/>
</dbReference>
<dbReference type="InterPro" id="IPR022669">
    <property type="entry name" value="Ribosomal_uL2_C"/>
</dbReference>
<dbReference type="InterPro" id="IPR022671">
    <property type="entry name" value="Ribosomal_uL2_CS"/>
</dbReference>
<dbReference type="InterPro" id="IPR014726">
    <property type="entry name" value="Ribosomal_uL2_dom3"/>
</dbReference>
<dbReference type="InterPro" id="IPR022666">
    <property type="entry name" value="Ribosomal_uL2_RNA-bd_dom"/>
</dbReference>
<dbReference type="InterPro" id="IPR008991">
    <property type="entry name" value="Translation_prot_SH3-like_sf"/>
</dbReference>
<dbReference type="NCBIfam" id="TIGR01171">
    <property type="entry name" value="rplB_bact"/>
    <property type="match status" value="1"/>
</dbReference>
<dbReference type="PANTHER" id="PTHR13691:SF5">
    <property type="entry name" value="LARGE RIBOSOMAL SUBUNIT PROTEIN UL2M"/>
    <property type="match status" value="1"/>
</dbReference>
<dbReference type="PANTHER" id="PTHR13691">
    <property type="entry name" value="RIBOSOMAL PROTEIN L2"/>
    <property type="match status" value="1"/>
</dbReference>
<dbReference type="Pfam" id="PF00181">
    <property type="entry name" value="Ribosomal_L2"/>
    <property type="match status" value="1"/>
</dbReference>
<dbReference type="Pfam" id="PF03947">
    <property type="entry name" value="Ribosomal_L2_C"/>
    <property type="match status" value="1"/>
</dbReference>
<dbReference type="PIRSF" id="PIRSF002158">
    <property type="entry name" value="Ribosomal_L2"/>
    <property type="match status" value="1"/>
</dbReference>
<dbReference type="SMART" id="SM01383">
    <property type="entry name" value="Ribosomal_L2"/>
    <property type="match status" value="1"/>
</dbReference>
<dbReference type="SMART" id="SM01382">
    <property type="entry name" value="Ribosomal_L2_C"/>
    <property type="match status" value="1"/>
</dbReference>
<dbReference type="SUPFAM" id="SSF50249">
    <property type="entry name" value="Nucleic acid-binding proteins"/>
    <property type="match status" value="1"/>
</dbReference>
<dbReference type="SUPFAM" id="SSF50104">
    <property type="entry name" value="Translation proteins SH3-like domain"/>
    <property type="match status" value="1"/>
</dbReference>
<dbReference type="PROSITE" id="PS00467">
    <property type="entry name" value="RIBOSOMAL_L2"/>
    <property type="match status" value="1"/>
</dbReference>
<proteinExistence type="inferred from homology"/>
<protein>
    <recommendedName>
        <fullName evidence="1">Large ribosomal subunit protein uL2</fullName>
    </recommendedName>
    <alternativeName>
        <fullName evidence="3">50S ribosomal protein L2</fullName>
    </alternativeName>
</protein>
<organism>
    <name type="scientific">Mycoplasma genitalium (strain ATCC 33530 / DSM 19775 / NCTC 10195 / G37)</name>
    <name type="common">Mycoplasmoides genitalium</name>
    <dbReference type="NCBI Taxonomy" id="243273"/>
    <lineage>
        <taxon>Bacteria</taxon>
        <taxon>Bacillati</taxon>
        <taxon>Mycoplasmatota</taxon>
        <taxon>Mycoplasmoidales</taxon>
        <taxon>Mycoplasmoidaceae</taxon>
        <taxon>Mycoplasmoides</taxon>
    </lineage>
</organism>
<feature type="chain" id="PRO_0000129581" description="Large ribosomal subunit protein uL2">
    <location>
        <begin position="1"/>
        <end position="285"/>
    </location>
</feature>
<feature type="region of interest" description="Disordered" evidence="2">
    <location>
        <begin position="215"/>
        <end position="285"/>
    </location>
</feature>
<feature type="compositionally biased region" description="Basic residues" evidence="2">
    <location>
        <begin position="256"/>
        <end position="272"/>
    </location>
</feature>
<sequence>MAIKKIISRSNSGIHNATVIDFKKLLTNSKPEKSLLVTLKKHAGRNNQGKITVRHHGGRHKRKYRLIDFKRYHYDNLKATVKSIEYDPNRSCFISLLHYQNGVKTYIISPDGIKVGDQVYSSDHAIDIKLGYCMPLAFIPEGTQVHNIELNPKGGGKIARSAGSYARILGQDETGKYIILQLISGETRKFLKECRATVGVVSNLDHNLVVIGKAGRSRHKGIRPTVRGSAMNPNDHPHGGGEGRSPVGRDAPRTPWGKRHMGVKTRNMKKHSTNLIIRNRKGEQY</sequence>
<comment type="function">
    <text evidence="1">One of the primary rRNA binding proteins. Required for association of the 30S and 50S subunits to form the 70S ribosome, for tRNA binding and peptide bond formation. It has been suggested to have peptidyltransferase activity; this is somewhat controversial. Makes several contacts with the 16S rRNA in the 70S ribosome.</text>
</comment>
<comment type="subunit">
    <text evidence="1">Part of the 50S ribosomal subunit. Forms a bridge to the 30S subunit in the 70S ribosome.</text>
</comment>
<comment type="similarity">
    <text evidence="1">Belongs to the universal ribosomal protein uL2 family.</text>
</comment>
<keyword id="KW-1185">Reference proteome</keyword>
<keyword id="KW-0687">Ribonucleoprotein</keyword>
<keyword id="KW-0689">Ribosomal protein</keyword>
<keyword id="KW-0694">RNA-binding</keyword>
<keyword id="KW-0699">rRNA-binding</keyword>
<name>RL2_MYCGE</name>
<reference key="1">
    <citation type="journal article" date="1995" name="Science">
        <title>The minimal gene complement of Mycoplasma genitalium.</title>
        <authorList>
            <person name="Fraser C.M."/>
            <person name="Gocayne J.D."/>
            <person name="White O."/>
            <person name="Adams M.D."/>
            <person name="Clayton R.A."/>
            <person name="Fleischmann R.D."/>
            <person name="Bult C.J."/>
            <person name="Kerlavage A.R."/>
            <person name="Sutton G.G."/>
            <person name="Kelley J.M."/>
            <person name="Fritchman J.L."/>
            <person name="Weidman J.F."/>
            <person name="Small K.V."/>
            <person name="Sandusky M."/>
            <person name="Fuhrmann J.L."/>
            <person name="Nguyen D.T."/>
            <person name="Utterback T.R."/>
            <person name="Saudek D.M."/>
            <person name="Phillips C.A."/>
            <person name="Merrick J.M."/>
            <person name="Tomb J.-F."/>
            <person name="Dougherty B.A."/>
            <person name="Bott K.F."/>
            <person name="Hu P.-C."/>
            <person name="Lucier T.S."/>
            <person name="Peterson S.N."/>
            <person name="Smith H.O."/>
            <person name="Hutchison C.A. III"/>
            <person name="Venter J.C."/>
        </authorList>
    </citation>
    <scope>NUCLEOTIDE SEQUENCE [LARGE SCALE GENOMIC DNA]</scope>
    <source>
        <strain>ATCC 33530 / DSM 19775 / NCTC 10195 / G37</strain>
    </source>
</reference>
<accession>P47400</accession>